<gene>
    <name type="primary">rbcL</name>
</gene>
<keyword id="KW-0113">Calvin cycle</keyword>
<keyword id="KW-0120">Carbon dioxide fixation</keyword>
<keyword id="KW-0150">Chloroplast</keyword>
<keyword id="KW-1015">Disulfide bond</keyword>
<keyword id="KW-0456">Lyase</keyword>
<keyword id="KW-0460">Magnesium</keyword>
<keyword id="KW-0479">Metal-binding</keyword>
<keyword id="KW-0503">Monooxygenase</keyword>
<keyword id="KW-0560">Oxidoreductase</keyword>
<keyword id="KW-0601">Photorespiration</keyword>
<keyword id="KW-0602">Photosynthesis</keyword>
<keyword id="KW-0934">Plastid</keyword>
<geneLocation type="chloroplast"/>
<proteinExistence type="inferred from homology"/>
<protein>
    <recommendedName>
        <fullName>Ribulose bisphosphate carboxylase large chain</fullName>
        <shortName>RuBisCO large subunit</shortName>
        <ecNumber>4.1.1.39</ecNumber>
    </recommendedName>
</protein>
<reference key="1">
    <citation type="journal article" date="1994" name="Proc. Natl. Acad. Sci. U.S.A.">
        <title>rbcL gene sequences provide evidence for the evolutionary lineages of leptosporangiate ferns.</title>
        <authorList>
            <person name="Hasebe M."/>
            <person name="Omori T."/>
            <person name="Nakazawa M."/>
            <person name="Sano T."/>
            <person name="Kato M."/>
            <person name="Iwatsuki K."/>
        </authorList>
    </citation>
    <scope>NUCLEOTIDE SEQUENCE [GENOMIC DNA]</scope>
    <source>
        <tissue>Leaf</tissue>
    </source>
</reference>
<evidence type="ECO:0000250" key="1"/>
<evidence type="ECO:0000255" key="2">
    <source>
        <dbReference type="PROSITE-ProRule" id="PRU10114"/>
    </source>
</evidence>
<evidence type="ECO:0000305" key="3"/>
<feature type="chain" id="PRO_0000062551" description="Ribulose bisphosphate carboxylase large chain">
    <location>
        <begin position="1" status="less than"/>
        <end position="414" status="greater than"/>
    </location>
</feature>
<feature type="active site" description="Proton acceptor" evidence="1">
    <location>
        <position position="153"/>
    </location>
</feature>
<feature type="active site" description="Proton acceptor" evidence="1">
    <location>
        <position position="272"/>
    </location>
</feature>
<feature type="binding site" description="in homodimeric partner" evidence="1">
    <location>
        <position position="101"/>
    </location>
    <ligand>
        <name>substrate</name>
    </ligand>
</feature>
<feature type="binding site" evidence="1">
    <location>
        <position position="151"/>
    </location>
    <ligand>
        <name>substrate</name>
    </ligand>
</feature>
<feature type="binding site" evidence="1">
    <location>
        <position position="155"/>
    </location>
    <ligand>
        <name>substrate</name>
    </ligand>
</feature>
<feature type="binding site" description="via carbamate group" evidence="2">
    <location>
        <position position="179"/>
    </location>
    <ligand>
        <name>Mg(2+)</name>
        <dbReference type="ChEBI" id="CHEBI:18420"/>
    </ligand>
</feature>
<feature type="binding site" evidence="2">
    <location>
        <position position="181"/>
    </location>
    <ligand>
        <name>Mg(2+)</name>
        <dbReference type="ChEBI" id="CHEBI:18420"/>
    </ligand>
</feature>
<feature type="binding site" evidence="2">
    <location>
        <position position="182"/>
    </location>
    <ligand>
        <name>Mg(2+)</name>
        <dbReference type="ChEBI" id="CHEBI:18420"/>
    </ligand>
</feature>
<feature type="binding site" evidence="1">
    <location>
        <position position="273"/>
    </location>
    <ligand>
        <name>substrate</name>
    </ligand>
</feature>
<feature type="binding site" evidence="1">
    <location>
        <position position="305"/>
    </location>
    <ligand>
        <name>substrate</name>
    </ligand>
</feature>
<feature type="binding site" evidence="1">
    <location>
        <position position="357"/>
    </location>
    <ligand>
        <name>substrate</name>
    </ligand>
</feature>
<feature type="site" description="Transition state stabilizer" evidence="1">
    <location>
        <position position="312"/>
    </location>
</feature>
<feature type="modified residue" description="N6-carboxylysine" evidence="2">
    <location>
        <position position="179"/>
    </location>
</feature>
<feature type="disulfide bond" description="Interchain; in linked form" evidence="1">
    <location>
        <position position="225"/>
    </location>
</feature>
<feature type="non-terminal residue">
    <location>
        <position position="1"/>
    </location>
</feature>
<feature type="non-terminal residue">
    <location>
        <position position="414"/>
    </location>
</feature>
<sequence length="414" mass="45729">TYYTPEYQTKDTDILAAFRMTPQPGVPAEEAGAAVAAESSTGTWTTVWTDGLTSLDRYKGRCYDIEPVAGEENQYIAYVAYPLDLFEEGSVTNMLTSIVGNVFGFKALRALRLEDLRIPPAYSKTFIGPPHGIQVERDKLNKYGRPLLGCTIKPKLGLSAKNYGRAVYECLRGGLDFTKDDENVNSQPFMRWRDRFLFVAEALFKAQAETGEIKGHYLNATAGTCEEMMKRAVFARELGAPIVMHDYLTGGFTANTSLAYYCRDNGLLLHIHRAMHAVIDRQRNHGIHFRVLAKALRMSGGDHIHAGTVVGKLEGEREVTLGFVDLLRDDYIEKDRSRGIYFTQDWVSMPGVLPVASGGIHVWHMPALTEIFGDDSVLQFGGGTLGHPWGNAPGAVANRVASEACVQALNEGLR</sequence>
<accession>Q36610</accession>
<name>RBL_ONYJA</name>
<dbReference type="EC" id="4.1.1.39"/>
<dbReference type="EMBL" id="U05641">
    <property type="protein sequence ID" value="AAA19990.1"/>
    <property type="molecule type" value="Genomic_DNA"/>
</dbReference>
<dbReference type="SMR" id="Q36610"/>
<dbReference type="GO" id="GO:0009507">
    <property type="term" value="C:chloroplast"/>
    <property type="evidence" value="ECO:0007669"/>
    <property type="project" value="UniProtKB-SubCell"/>
</dbReference>
<dbReference type="GO" id="GO:0000287">
    <property type="term" value="F:magnesium ion binding"/>
    <property type="evidence" value="ECO:0007669"/>
    <property type="project" value="InterPro"/>
</dbReference>
<dbReference type="GO" id="GO:0004497">
    <property type="term" value="F:monooxygenase activity"/>
    <property type="evidence" value="ECO:0007669"/>
    <property type="project" value="UniProtKB-KW"/>
</dbReference>
<dbReference type="GO" id="GO:0016984">
    <property type="term" value="F:ribulose-bisphosphate carboxylase activity"/>
    <property type="evidence" value="ECO:0007669"/>
    <property type="project" value="UniProtKB-EC"/>
</dbReference>
<dbReference type="GO" id="GO:0009853">
    <property type="term" value="P:photorespiration"/>
    <property type="evidence" value="ECO:0007669"/>
    <property type="project" value="UniProtKB-KW"/>
</dbReference>
<dbReference type="GO" id="GO:0019253">
    <property type="term" value="P:reductive pentose-phosphate cycle"/>
    <property type="evidence" value="ECO:0007669"/>
    <property type="project" value="UniProtKB-KW"/>
</dbReference>
<dbReference type="FunFam" id="3.20.20.110:FF:000003">
    <property type="entry name" value="Ribulose bisphosphate carboxylase large chain"/>
    <property type="match status" value="1"/>
</dbReference>
<dbReference type="Gene3D" id="3.20.20.110">
    <property type="entry name" value="Ribulose bisphosphate carboxylase, large subunit, C-terminal domain"/>
    <property type="match status" value="1"/>
</dbReference>
<dbReference type="Gene3D" id="3.30.70.150">
    <property type="entry name" value="RuBisCO large subunit, N-terminal domain"/>
    <property type="match status" value="1"/>
</dbReference>
<dbReference type="InterPro" id="IPR033966">
    <property type="entry name" value="RuBisCO"/>
</dbReference>
<dbReference type="InterPro" id="IPR020878">
    <property type="entry name" value="RuBisCo_large_chain_AS"/>
</dbReference>
<dbReference type="InterPro" id="IPR000685">
    <property type="entry name" value="RuBisCO_lsu_C"/>
</dbReference>
<dbReference type="InterPro" id="IPR036376">
    <property type="entry name" value="RuBisCO_lsu_C_sf"/>
</dbReference>
<dbReference type="InterPro" id="IPR017443">
    <property type="entry name" value="RuBisCO_lsu_fd_N"/>
</dbReference>
<dbReference type="InterPro" id="IPR036422">
    <property type="entry name" value="RuBisCO_lsu_N_sf"/>
</dbReference>
<dbReference type="NCBIfam" id="NF003252">
    <property type="entry name" value="PRK04208.1"/>
    <property type="match status" value="1"/>
</dbReference>
<dbReference type="PANTHER" id="PTHR42704">
    <property type="entry name" value="RIBULOSE BISPHOSPHATE CARBOXYLASE"/>
    <property type="match status" value="1"/>
</dbReference>
<dbReference type="PANTHER" id="PTHR42704:SF17">
    <property type="entry name" value="RIBULOSE BISPHOSPHATE CARBOXYLASE LARGE CHAIN"/>
    <property type="match status" value="1"/>
</dbReference>
<dbReference type="Pfam" id="PF00016">
    <property type="entry name" value="RuBisCO_large"/>
    <property type="match status" value="1"/>
</dbReference>
<dbReference type="Pfam" id="PF02788">
    <property type="entry name" value="RuBisCO_large_N"/>
    <property type="match status" value="1"/>
</dbReference>
<dbReference type="SFLD" id="SFLDG01052">
    <property type="entry name" value="RuBisCO"/>
    <property type="match status" value="1"/>
</dbReference>
<dbReference type="SFLD" id="SFLDS00014">
    <property type="entry name" value="RuBisCO"/>
    <property type="match status" value="1"/>
</dbReference>
<dbReference type="SFLD" id="SFLDG00301">
    <property type="entry name" value="RuBisCO-like_proteins"/>
    <property type="match status" value="1"/>
</dbReference>
<dbReference type="SUPFAM" id="SSF51649">
    <property type="entry name" value="RuBisCo, C-terminal domain"/>
    <property type="match status" value="1"/>
</dbReference>
<dbReference type="SUPFAM" id="SSF54966">
    <property type="entry name" value="RuBisCO, large subunit, small (N-terminal) domain"/>
    <property type="match status" value="1"/>
</dbReference>
<dbReference type="PROSITE" id="PS00157">
    <property type="entry name" value="RUBISCO_LARGE"/>
    <property type="match status" value="1"/>
</dbReference>
<comment type="function">
    <text evidence="1">RuBisCO catalyzes two reactions: the carboxylation of D-ribulose 1,5-bisphosphate, the primary event in carbon dioxide fixation, as well as the oxidative fragmentation of the pentose substrate in the photorespiration process. Both reactions occur simultaneously and in competition at the same active site (By similarity).</text>
</comment>
<comment type="catalytic activity">
    <reaction>
        <text>2 (2R)-3-phosphoglycerate + 2 H(+) = D-ribulose 1,5-bisphosphate + CO2 + H2O</text>
        <dbReference type="Rhea" id="RHEA:23124"/>
        <dbReference type="ChEBI" id="CHEBI:15377"/>
        <dbReference type="ChEBI" id="CHEBI:15378"/>
        <dbReference type="ChEBI" id="CHEBI:16526"/>
        <dbReference type="ChEBI" id="CHEBI:57870"/>
        <dbReference type="ChEBI" id="CHEBI:58272"/>
        <dbReference type="EC" id="4.1.1.39"/>
    </reaction>
</comment>
<comment type="catalytic activity">
    <reaction>
        <text>D-ribulose 1,5-bisphosphate + O2 = 2-phosphoglycolate + (2R)-3-phosphoglycerate + 2 H(+)</text>
        <dbReference type="Rhea" id="RHEA:36631"/>
        <dbReference type="ChEBI" id="CHEBI:15378"/>
        <dbReference type="ChEBI" id="CHEBI:15379"/>
        <dbReference type="ChEBI" id="CHEBI:57870"/>
        <dbReference type="ChEBI" id="CHEBI:58033"/>
        <dbReference type="ChEBI" id="CHEBI:58272"/>
    </reaction>
</comment>
<comment type="cofactor">
    <cofactor evidence="1">
        <name>Mg(2+)</name>
        <dbReference type="ChEBI" id="CHEBI:18420"/>
    </cofactor>
    <text evidence="1">Binds 1 Mg(2+) ion per subunit.</text>
</comment>
<comment type="subunit">
    <text evidence="1">Heterohexadecamer of 8 large chains and 8 small chains; disulfide-linked. The disulfide link is formed within the large subunit homodimers (By similarity).</text>
</comment>
<comment type="subcellular location">
    <subcellularLocation>
        <location>Plastid</location>
        <location>Chloroplast</location>
    </subcellularLocation>
</comment>
<comment type="PTM">
    <text evidence="1">The disulfide bond which can form in the large chain dimeric partners within the hexadecamer appears to be associated with oxidative stress and protein turnover.</text>
</comment>
<comment type="miscellaneous">
    <text evidence="1">The basic functional RuBisCO is composed of a large chain homodimer in a 'head-to-tail' conformation. In form I RuBisCO this homodimer is arranged in a barrel-like tetramer with the small subunits forming a tetrameric 'cap' on each end of the 'barrel' (By similarity).</text>
</comment>
<comment type="similarity">
    <text evidence="3">Belongs to the RuBisCO large chain family. Type I subfamily.</text>
</comment>
<organism>
    <name type="scientific">Onychium japonicum</name>
    <name type="common">Japanese claw fern</name>
    <name type="synonym">Carrot fern</name>
    <dbReference type="NCBI Taxonomy" id="32172"/>
    <lineage>
        <taxon>Eukaryota</taxon>
        <taxon>Viridiplantae</taxon>
        <taxon>Streptophyta</taxon>
        <taxon>Embryophyta</taxon>
        <taxon>Tracheophyta</taxon>
        <taxon>Polypodiopsida</taxon>
        <taxon>Polypodiidae</taxon>
        <taxon>Polypodiales</taxon>
        <taxon>Pteridineae</taxon>
        <taxon>Pteridaceae</taxon>
        <taxon>Pteridoideae</taxon>
        <taxon>Onychium</taxon>
    </lineage>
</organism>